<proteinExistence type="evidence at transcript level"/>
<organism>
    <name type="scientific">Mus musculus</name>
    <name type="common">Mouse</name>
    <dbReference type="NCBI Taxonomy" id="10090"/>
    <lineage>
        <taxon>Eukaryota</taxon>
        <taxon>Metazoa</taxon>
        <taxon>Chordata</taxon>
        <taxon>Craniata</taxon>
        <taxon>Vertebrata</taxon>
        <taxon>Euteleostomi</taxon>
        <taxon>Mammalia</taxon>
        <taxon>Eutheria</taxon>
        <taxon>Euarchontoglires</taxon>
        <taxon>Glires</taxon>
        <taxon>Rodentia</taxon>
        <taxon>Myomorpha</taxon>
        <taxon>Muroidea</taxon>
        <taxon>Muridae</taxon>
        <taxon>Murinae</taxon>
        <taxon>Mus</taxon>
        <taxon>Mus</taxon>
    </lineage>
</organism>
<feature type="chain" id="PRO_0000203756" description="Guanine nucleotide-binding protein subunit alpha-15">
    <location>
        <begin position="1"/>
        <end position="374"/>
    </location>
</feature>
<feature type="domain" description="G-alpha" evidence="2">
    <location>
        <begin position="41"/>
        <end position="374"/>
    </location>
</feature>
<feature type="region of interest" description="G1 motif" evidence="2">
    <location>
        <begin position="44"/>
        <end position="57"/>
    </location>
</feature>
<feature type="region of interest" description="G2 motif" evidence="2">
    <location>
        <begin position="181"/>
        <end position="189"/>
    </location>
</feature>
<feature type="region of interest" description="G3 motif" evidence="2">
    <location>
        <begin position="204"/>
        <end position="213"/>
    </location>
</feature>
<feature type="region of interest" description="G4 motif" evidence="2">
    <location>
        <begin position="273"/>
        <end position="280"/>
    </location>
</feature>
<feature type="region of interest" description="G5 motif" evidence="2">
    <location>
        <begin position="344"/>
        <end position="349"/>
    </location>
</feature>
<feature type="binding site" evidence="1">
    <location>
        <begin position="49"/>
        <end position="56"/>
    </location>
    <ligand>
        <name>GTP</name>
        <dbReference type="ChEBI" id="CHEBI:37565"/>
    </ligand>
</feature>
<feature type="binding site" evidence="1">
    <location>
        <position position="56"/>
    </location>
    <ligand>
        <name>Mg(2+)</name>
        <dbReference type="ChEBI" id="CHEBI:18420"/>
    </ligand>
</feature>
<feature type="binding site" evidence="1">
    <location>
        <begin position="183"/>
        <end position="189"/>
    </location>
    <ligand>
        <name>GTP</name>
        <dbReference type="ChEBI" id="CHEBI:37565"/>
    </ligand>
</feature>
<feature type="binding site" evidence="1">
    <location>
        <position position="189"/>
    </location>
    <ligand>
        <name>Mg(2+)</name>
        <dbReference type="ChEBI" id="CHEBI:18420"/>
    </ligand>
</feature>
<feature type="binding site" evidence="1">
    <location>
        <begin position="208"/>
        <end position="212"/>
    </location>
    <ligand>
        <name>GTP</name>
        <dbReference type="ChEBI" id="CHEBI:37565"/>
    </ligand>
</feature>
<feature type="binding site" evidence="1">
    <location>
        <begin position="277"/>
        <end position="280"/>
    </location>
    <ligand>
        <name>GTP</name>
        <dbReference type="ChEBI" id="CHEBI:37565"/>
    </ligand>
</feature>
<feature type="binding site" evidence="1">
    <location>
        <position position="346"/>
    </location>
    <ligand>
        <name>GTP</name>
        <dbReference type="ChEBI" id="CHEBI:37565"/>
    </ligand>
</feature>
<protein>
    <recommendedName>
        <fullName>Guanine nucleotide-binding protein subunit alpha-15</fullName>
        <shortName>G alpha-15</shortName>
        <shortName>G-protein subunit alpha-15</shortName>
    </recommendedName>
</protein>
<accession>P30678</accession>
<accession>Q8K1S0</accession>
<evidence type="ECO:0000250" key="1"/>
<evidence type="ECO:0000255" key="2">
    <source>
        <dbReference type="PROSITE-ProRule" id="PRU01230"/>
    </source>
</evidence>
<evidence type="ECO:0000269" key="3">
    <source>
    </source>
</evidence>
<evidence type="ECO:0000305" key="4"/>
<keyword id="KW-0342">GTP-binding</keyword>
<keyword id="KW-0460">Magnesium</keyword>
<keyword id="KW-0479">Metal-binding</keyword>
<keyword id="KW-0547">Nucleotide-binding</keyword>
<keyword id="KW-1185">Reference proteome</keyword>
<keyword id="KW-0807">Transducer</keyword>
<gene>
    <name type="primary">Gna15</name>
    <name type="synonym">Gna-15</name>
</gene>
<reference key="1">
    <citation type="journal article" date="1991" name="Proc. Natl. Acad. Sci. U.S.A.">
        <title>Characterization of G-protein alpha subunits in the Gq class: expression in murine tissues and in stromal and hematopoietic cell lines.</title>
        <authorList>
            <person name="Wilkie T.M."/>
            <person name="Scherle P.A."/>
            <person name="Strathmann M.P."/>
            <person name="Slepak V.Z."/>
            <person name="Simon M.I."/>
        </authorList>
    </citation>
    <scope>NUCLEOTIDE SEQUENCE [MRNA]</scope>
</reference>
<reference key="2">
    <citation type="journal article" date="1996" name="Genomics">
        <title>Gene structure of murine Gna11 and Gna15: tandemly duplicated Gq class G protein alpha subunit genes.</title>
        <authorList>
            <person name="Davignon I."/>
            <person name="Barnard M."/>
            <person name="Gavrilova O."/>
            <person name="Sweet K.K."/>
            <person name="Wilkie T.M."/>
        </authorList>
    </citation>
    <scope>NUCLEOTIDE SEQUENCE [GENOMIC DNA]</scope>
    <source>
        <strain>129/Sv</strain>
    </source>
</reference>
<reference key="3">
    <citation type="journal article" date="2004" name="Genome Res.">
        <title>The status, quality, and expansion of the NIH full-length cDNA project: the Mammalian Gene Collection (MGC).</title>
        <authorList>
            <consortium name="The MGC Project Team"/>
        </authorList>
    </citation>
    <scope>NUCLEOTIDE SEQUENCE [LARGE SCALE MRNA]</scope>
</reference>
<reference key="4">
    <citation type="journal article" date="2002" name="FEBS Lett.">
        <title>Tandem genomic arrangement of a G protein (Gna15) and G protein-coupled receptor (s1p(4)/lp(C1)/Edg6) gene.</title>
        <authorList>
            <person name="Contos J.J.A."/>
            <person name="Ye X."/>
            <person name="Sah V.P."/>
            <person name="Chun J."/>
        </authorList>
    </citation>
    <scope>NUCLEOTIDE SEQUENCE OF 301-374</scope>
    <scope>TISSUE SPECIFICITY</scope>
</reference>
<sequence>MARSLTWGCCPWCLTEEEKTAARIDQEINRILLEQKKQEREELKLLLLGPGESGKSTFIKQMRIIHGVGYSEEDRRAFRLLIYQNIFVSMQAMIDAMDRLQIPFSRPDSKQHASLVMTQDPYKVSTFEKPYAVAMQYLWRDAGIRACYERRREFHLLDSAVYYLSHLERISEDSYIPTAQDVLRSRMPTTGINEYCFSVKKTKLRIVDVGGQRSERRKWIHCFENVIALIYLASLSEYDQCLEENDQENRMEESLALFSTILELPWFKSTSVILFLNKTDILEDKIHTSHLATYFPSFQGPRRDAEAAKSFILDMYARVYASCAEPQDGGRKGSRARRFFAHFTCATDTQSVRSVFKDVRDSVLARYLDEINLL</sequence>
<dbReference type="EMBL" id="M80632">
    <property type="protein sequence ID" value="AAA37713.1"/>
    <property type="molecule type" value="mRNA"/>
</dbReference>
<dbReference type="EMBL" id="U37419">
    <property type="protein sequence ID" value="AAB36840.1"/>
    <property type="molecule type" value="Genomic_DNA"/>
</dbReference>
<dbReference type="EMBL" id="U37414">
    <property type="protein sequence ID" value="AAB36840.1"/>
    <property type="status" value="JOINED"/>
    <property type="molecule type" value="Genomic_DNA"/>
</dbReference>
<dbReference type="EMBL" id="U37415">
    <property type="protein sequence ID" value="AAB36840.1"/>
    <property type="status" value="JOINED"/>
    <property type="molecule type" value="Genomic_DNA"/>
</dbReference>
<dbReference type="EMBL" id="U37416">
    <property type="protein sequence ID" value="AAB36840.1"/>
    <property type="status" value="JOINED"/>
    <property type="molecule type" value="Genomic_DNA"/>
</dbReference>
<dbReference type="EMBL" id="U37417">
    <property type="protein sequence ID" value="AAB36840.1"/>
    <property type="status" value="JOINED"/>
    <property type="molecule type" value="Genomic_DNA"/>
</dbReference>
<dbReference type="EMBL" id="U37418">
    <property type="protein sequence ID" value="AAB36840.1"/>
    <property type="status" value="JOINED"/>
    <property type="molecule type" value="Genomic_DNA"/>
</dbReference>
<dbReference type="EMBL" id="BC005439">
    <property type="protein sequence ID" value="AAH05439.1"/>
    <property type="molecule type" value="mRNA"/>
</dbReference>
<dbReference type="EMBL" id="BC011098">
    <property type="protein sequence ID" value="AAH11098.1"/>
    <property type="molecule type" value="mRNA"/>
</dbReference>
<dbReference type="EMBL" id="AJ489247">
    <property type="protein sequence ID" value="CAD33253.1"/>
    <property type="molecule type" value="Genomic_DNA"/>
</dbReference>
<dbReference type="CCDS" id="CCDS24060.1"/>
<dbReference type="PIR" id="B41534">
    <property type="entry name" value="B41534"/>
</dbReference>
<dbReference type="RefSeq" id="NP_034434.1">
    <property type="nucleotide sequence ID" value="NM_010304.3"/>
</dbReference>
<dbReference type="SMR" id="P30678"/>
<dbReference type="FunCoup" id="P30678">
    <property type="interactions" value="304"/>
</dbReference>
<dbReference type="STRING" id="10090.ENSMUSP00000049175"/>
<dbReference type="iPTMnet" id="P30678"/>
<dbReference type="PhosphoSitePlus" id="P30678"/>
<dbReference type="PaxDb" id="10090-ENSMUSP00000049175"/>
<dbReference type="ProteomicsDB" id="267638"/>
<dbReference type="Antibodypedia" id="23159">
    <property type="antibodies" value="265 antibodies from 30 providers"/>
</dbReference>
<dbReference type="DNASU" id="14676"/>
<dbReference type="Ensembl" id="ENSMUST00000043709.8">
    <property type="protein sequence ID" value="ENSMUSP00000049175.8"/>
    <property type="gene ID" value="ENSMUSG00000034792.9"/>
</dbReference>
<dbReference type="GeneID" id="14676"/>
<dbReference type="KEGG" id="mmu:14676"/>
<dbReference type="UCSC" id="uc007gij.1">
    <property type="organism name" value="mouse"/>
</dbReference>
<dbReference type="AGR" id="MGI:95770"/>
<dbReference type="CTD" id="2769"/>
<dbReference type="MGI" id="MGI:95770">
    <property type="gene designation" value="Gna15"/>
</dbReference>
<dbReference type="VEuPathDB" id="HostDB:ENSMUSG00000034792"/>
<dbReference type="eggNOG" id="KOG0085">
    <property type="taxonomic scope" value="Eukaryota"/>
</dbReference>
<dbReference type="GeneTree" id="ENSGT00940000161736"/>
<dbReference type="HOGENOM" id="CLU_014184_6_0_1"/>
<dbReference type="InParanoid" id="P30678"/>
<dbReference type="OMA" id="TTIHSAW"/>
<dbReference type="OrthoDB" id="5817230at2759"/>
<dbReference type="PhylomeDB" id="P30678"/>
<dbReference type="TreeFam" id="TF300673"/>
<dbReference type="Reactome" id="R-MMU-112043">
    <property type="pathway name" value="PLC beta mediated events"/>
</dbReference>
<dbReference type="Reactome" id="R-MMU-202040">
    <property type="pathway name" value="G-protein activation"/>
</dbReference>
<dbReference type="Reactome" id="R-MMU-399997">
    <property type="pathway name" value="Acetylcholine regulates insulin secretion"/>
</dbReference>
<dbReference type="Reactome" id="R-MMU-416476">
    <property type="pathway name" value="G alpha (q) signalling events"/>
</dbReference>
<dbReference type="Reactome" id="R-MMU-418592">
    <property type="pathway name" value="ADP signalling through P2Y purinoceptor 1"/>
</dbReference>
<dbReference type="Reactome" id="R-MMU-428930">
    <property type="pathway name" value="Thromboxane signalling through TP receptor"/>
</dbReference>
<dbReference type="Reactome" id="R-MMU-434316">
    <property type="pathway name" value="Fatty Acids bound to GPR40 (FFAR1) regulate insulin secretion"/>
</dbReference>
<dbReference type="Reactome" id="R-MMU-456926">
    <property type="pathway name" value="Thrombin signalling through proteinase activated receptors (PARs)"/>
</dbReference>
<dbReference type="Reactome" id="R-MMU-6814122">
    <property type="pathway name" value="Cooperation of PDCL (PhLP1) and TRiC/CCT in G-protein beta folding"/>
</dbReference>
<dbReference type="BioGRID-ORCS" id="14676">
    <property type="hits" value="1 hit in 76 CRISPR screens"/>
</dbReference>
<dbReference type="ChiTaRS" id="Gna15">
    <property type="organism name" value="mouse"/>
</dbReference>
<dbReference type="PRO" id="PR:P30678"/>
<dbReference type="Proteomes" id="UP000000589">
    <property type="component" value="Chromosome 10"/>
</dbReference>
<dbReference type="RNAct" id="P30678">
    <property type="molecule type" value="protein"/>
</dbReference>
<dbReference type="Bgee" id="ENSMUSG00000034792">
    <property type="expression patterns" value="Expressed in granulocyte and 61 other cell types or tissues"/>
</dbReference>
<dbReference type="GO" id="GO:0005834">
    <property type="term" value="C:heterotrimeric G-protein complex"/>
    <property type="evidence" value="ECO:0000303"/>
    <property type="project" value="UniProtKB"/>
</dbReference>
<dbReference type="GO" id="GO:0001664">
    <property type="term" value="F:G protein-coupled receptor binding"/>
    <property type="evidence" value="ECO:0000314"/>
    <property type="project" value="UniProtKB"/>
</dbReference>
<dbReference type="GO" id="GO:0031683">
    <property type="term" value="F:G-protein beta/gamma-subunit complex binding"/>
    <property type="evidence" value="ECO:0007669"/>
    <property type="project" value="InterPro"/>
</dbReference>
<dbReference type="GO" id="GO:0005525">
    <property type="term" value="F:GTP binding"/>
    <property type="evidence" value="ECO:0007669"/>
    <property type="project" value="UniProtKB-KW"/>
</dbReference>
<dbReference type="GO" id="GO:0003924">
    <property type="term" value="F:GTPase activity"/>
    <property type="evidence" value="ECO:0000304"/>
    <property type="project" value="MGI"/>
</dbReference>
<dbReference type="GO" id="GO:0046872">
    <property type="term" value="F:metal ion binding"/>
    <property type="evidence" value="ECO:0007669"/>
    <property type="project" value="UniProtKB-KW"/>
</dbReference>
<dbReference type="GO" id="GO:0019722">
    <property type="term" value="P:calcium-mediated signaling"/>
    <property type="evidence" value="ECO:0000314"/>
    <property type="project" value="UniProtKB"/>
</dbReference>
<dbReference type="GO" id="GO:0007186">
    <property type="term" value="P:G protein-coupled receptor signaling pathway"/>
    <property type="evidence" value="ECO:0000304"/>
    <property type="project" value="MGI"/>
</dbReference>
<dbReference type="GO" id="GO:0007200">
    <property type="term" value="P:phospholipase C-activating G protein-coupled receptor signaling pathway"/>
    <property type="evidence" value="ECO:0000315"/>
    <property type="project" value="MGI"/>
</dbReference>
<dbReference type="CDD" id="cd00066">
    <property type="entry name" value="G-alpha"/>
    <property type="match status" value="1"/>
</dbReference>
<dbReference type="FunFam" id="1.10.400.10:FF:000002">
    <property type="entry name" value="guanine nucleotide-binding protein G(Q) subunit alpha"/>
    <property type="match status" value="1"/>
</dbReference>
<dbReference type="FunFam" id="3.40.50.300:FF:000692">
    <property type="entry name" value="Guanine nucleotide-binding protein subunit alpha"/>
    <property type="match status" value="1"/>
</dbReference>
<dbReference type="FunFam" id="3.40.50.300:FF:000985">
    <property type="entry name" value="Guanine nucleotide-binding protein subunit alpha-15"/>
    <property type="match status" value="1"/>
</dbReference>
<dbReference type="Gene3D" id="1.10.400.10">
    <property type="entry name" value="GI Alpha 1, domain 2-like"/>
    <property type="match status" value="1"/>
</dbReference>
<dbReference type="Gene3D" id="3.40.50.300">
    <property type="entry name" value="P-loop containing nucleotide triphosphate hydrolases"/>
    <property type="match status" value="1"/>
</dbReference>
<dbReference type="InterPro" id="IPR000654">
    <property type="entry name" value="Gprotein_alpha_Q"/>
</dbReference>
<dbReference type="InterPro" id="IPR001019">
    <property type="entry name" value="Gprotein_alpha_su"/>
</dbReference>
<dbReference type="InterPro" id="IPR011025">
    <property type="entry name" value="GproteinA_insert"/>
</dbReference>
<dbReference type="InterPro" id="IPR027417">
    <property type="entry name" value="P-loop_NTPase"/>
</dbReference>
<dbReference type="PANTHER" id="PTHR10218">
    <property type="entry name" value="GTP-BINDING PROTEIN ALPHA SUBUNIT"/>
    <property type="match status" value="1"/>
</dbReference>
<dbReference type="PANTHER" id="PTHR10218:SF217">
    <property type="entry name" value="GUANINE NUCLEOTIDE-BINDING PROTEIN SUBUNIT ALPHA-15"/>
    <property type="match status" value="1"/>
</dbReference>
<dbReference type="Pfam" id="PF00503">
    <property type="entry name" value="G-alpha"/>
    <property type="match status" value="1"/>
</dbReference>
<dbReference type="PRINTS" id="PR00318">
    <property type="entry name" value="GPROTEINA"/>
</dbReference>
<dbReference type="PRINTS" id="PR00442">
    <property type="entry name" value="GPROTEINAQ"/>
</dbReference>
<dbReference type="SMART" id="SM00275">
    <property type="entry name" value="G_alpha"/>
    <property type="match status" value="1"/>
</dbReference>
<dbReference type="SUPFAM" id="SSF52540">
    <property type="entry name" value="P-loop containing nucleoside triphosphate hydrolases"/>
    <property type="match status" value="1"/>
</dbReference>
<dbReference type="SUPFAM" id="SSF47895">
    <property type="entry name" value="Transducin (alpha subunit), insertion domain"/>
    <property type="match status" value="1"/>
</dbReference>
<dbReference type="PROSITE" id="PS51882">
    <property type="entry name" value="G_ALPHA"/>
    <property type="match status" value="1"/>
</dbReference>
<name>GNA15_MOUSE</name>
<comment type="function">
    <text>Guanine nucleotide-binding proteins (G proteins) are involved as modulators or transducers in various transmembrane signaling systems.</text>
</comment>
<comment type="subunit">
    <text>G proteins are composed of 3 units; alpha, beta and gamma. The alpha chain contains the guanine nucleotide binding site.</text>
</comment>
<comment type="tissue specificity">
    <text evidence="3">Expressed primarily in hematopoietic cells. Coexpressed with EDG6 at the same relative levels in all tissues examined, with the highest levels in adult spleen and lung.</text>
</comment>
<comment type="similarity">
    <text evidence="4">Belongs to the G-alpha family. G(q) subfamily.</text>
</comment>